<dbReference type="EC" id="4.1.99.17" evidence="1"/>
<dbReference type="EMBL" id="CP000227">
    <property type="protein sequence ID" value="ACM15455.1"/>
    <property type="molecule type" value="Genomic_DNA"/>
</dbReference>
<dbReference type="SMR" id="B9J5N4"/>
<dbReference type="KEGG" id="bcq:BCQ_5055"/>
<dbReference type="HOGENOM" id="CLU_013181_2_1_9"/>
<dbReference type="UniPathway" id="UPA00060"/>
<dbReference type="Proteomes" id="UP000000441">
    <property type="component" value="Chromosome"/>
</dbReference>
<dbReference type="GO" id="GO:0005829">
    <property type="term" value="C:cytosol"/>
    <property type="evidence" value="ECO:0007669"/>
    <property type="project" value="TreeGrafter"/>
</dbReference>
<dbReference type="GO" id="GO:0051539">
    <property type="term" value="F:4 iron, 4 sulfur cluster binding"/>
    <property type="evidence" value="ECO:0007669"/>
    <property type="project" value="UniProtKB-KW"/>
</dbReference>
<dbReference type="GO" id="GO:0016830">
    <property type="term" value="F:carbon-carbon lyase activity"/>
    <property type="evidence" value="ECO:0007669"/>
    <property type="project" value="InterPro"/>
</dbReference>
<dbReference type="GO" id="GO:0008270">
    <property type="term" value="F:zinc ion binding"/>
    <property type="evidence" value="ECO:0007669"/>
    <property type="project" value="UniProtKB-UniRule"/>
</dbReference>
<dbReference type="GO" id="GO:0009228">
    <property type="term" value="P:thiamine biosynthetic process"/>
    <property type="evidence" value="ECO:0007669"/>
    <property type="project" value="UniProtKB-KW"/>
</dbReference>
<dbReference type="GO" id="GO:0009229">
    <property type="term" value="P:thiamine diphosphate biosynthetic process"/>
    <property type="evidence" value="ECO:0007669"/>
    <property type="project" value="UniProtKB-UniRule"/>
</dbReference>
<dbReference type="FunFam" id="3.20.20.540:FF:000001">
    <property type="entry name" value="Phosphomethylpyrimidine synthase"/>
    <property type="match status" value="1"/>
</dbReference>
<dbReference type="Gene3D" id="6.10.250.620">
    <property type="match status" value="1"/>
</dbReference>
<dbReference type="Gene3D" id="3.20.20.540">
    <property type="entry name" value="Radical SAM ThiC family, central domain"/>
    <property type="match status" value="1"/>
</dbReference>
<dbReference type="HAMAP" id="MF_00089">
    <property type="entry name" value="ThiC"/>
    <property type="match status" value="1"/>
</dbReference>
<dbReference type="InterPro" id="IPR037509">
    <property type="entry name" value="ThiC"/>
</dbReference>
<dbReference type="InterPro" id="IPR025747">
    <property type="entry name" value="ThiC-associated_dom"/>
</dbReference>
<dbReference type="InterPro" id="IPR038521">
    <property type="entry name" value="ThiC/Bza_core_dom"/>
</dbReference>
<dbReference type="InterPro" id="IPR002817">
    <property type="entry name" value="ThiC/BzaA/B"/>
</dbReference>
<dbReference type="NCBIfam" id="NF006763">
    <property type="entry name" value="PRK09284.1"/>
    <property type="match status" value="1"/>
</dbReference>
<dbReference type="NCBIfam" id="NF009895">
    <property type="entry name" value="PRK13352.1"/>
    <property type="match status" value="1"/>
</dbReference>
<dbReference type="NCBIfam" id="TIGR00190">
    <property type="entry name" value="thiC"/>
    <property type="match status" value="1"/>
</dbReference>
<dbReference type="PANTHER" id="PTHR30557:SF1">
    <property type="entry name" value="PHOSPHOMETHYLPYRIMIDINE SYNTHASE, CHLOROPLASTIC"/>
    <property type="match status" value="1"/>
</dbReference>
<dbReference type="PANTHER" id="PTHR30557">
    <property type="entry name" value="THIAMINE BIOSYNTHESIS PROTEIN THIC"/>
    <property type="match status" value="1"/>
</dbReference>
<dbReference type="Pfam" id="PF13667">
    <property type="entry name" value="ThiC-associated"/>
    <property type="match status" value="1"/>
</dbReference>
<dbReference type="Pfam" id="PF01964">
    <property type="entry name" value="ThiC_Rad_SAM"/>
    <property type="match status" value="1"/>
</dbReference>
<dbReference type="SFLD" id="SFLDF00407">
    <property type="entry name" value="phosphomethylpyrimidine_syntha"/>
    <property type="match status" value="1"/>
</dbReference>
<dbReference type="SFLD" id="SFLDG01114">
    <property type="entry name" value="phosphomethylpyrimidine_syntha"/>
    <property type="match status" value="1"/>
</dbReference>
<dbReference type="SFLD" id="SFLDS00113">
    <property type="entry name" value="Radical_SAM_Phosphomethylpyrim"/>
    <property type="match status" value="1"/>
</dbReference>
<gene>
    <name evidence="1" type="primary">thiC</name>
    <name type="ordered locus">BCQ_5055</name>
</gene>
<protein>
    <recommendedName>
        <fullName evidence="1">Phosphomethylpyrimidine synthase</fullName>
        <ecNumber evidence="1">4.1.99.17</ecNumber>
    </recommendedName>
    <alternativeName>
        <fullName evidence="1">Hydroxymethylpyrimidine phosphate synthase</fullName>
        <shortName evidence="1">HMP-P synthase</shortName>
        <shortName evidence="1">HMP-phosphate synthase</shortName>
        <shortName evidence="1">HMPP synthase</shortName>
    </alternativeName>
    <alternativeName>
        <fullName evidence="1">Thiamine biosynthesis protein ThiC</fullName>
    </alternativeName>
</protein>
<comment type="function">
    <text evidence="1">Catalyzes the synthesis of the hydroxymethylpyrimidine phosphate (HMP-P) moiety of thiamine from aminoimidazole ribotide (AIR) in a radical S-adenosyl-L-methionine (SAM)-dependent reaction.</text>
</comment>
<comment type="catalytic activity">
    <reaction evidence="1">
        <text>5-amino-1-(5-phospho-beta-D-ribosyl)imidazole + S-adenosyl-L-methionine = 4-amino-2-methyl-5-(phosphooxymethyl)pyrimidine + CO + 5'-deoxyadenosine + formate + L-methionine + 3 H(+)</text>
        <dbReference type="Rhea" id="RHEA:24840"/>
        <dbReference type="ChEBI" id="CHEBI:15378"/>
        <dbReference type="ChEBI" id="CHEBI:15740"/>
        <dbReference type="ChEBI" id="CHEBI:17245"/>
        <dbReference type="ChEBI" id="CHEBI:17319"/>
        <dbReference type="ChEBI" id="CHEBI:57844"/>
        <dbReference type="ChEBI" id="CHEBI:58354"/>
        <dbReference type="ChEBI" id="CHEBI:59789"/>
        <dbReference type="ChEBI" id="CHEBI:137981"/>
        <dbReference type="EC" id="4.1.99.17"/>
    </reaction>
</comment>
<comment type="cofactor">
    <cofactor evidence="1">
        <name>[4Fe-4S] cluster</name>
        <dbReference type="ChEBI" id="CHEBI:49883"/>
    </cofactor>
    <text evidence="1">Binds 1 [4Fe-4S] cluster per subunit. The cluster is coordinated with 3 cysteines and an exchangeable S-adenosyl-L-methionine.</text>
</comment>
<comment type="pathway">
    <text evidence="1">Cofactor biosynthesis; thiamine diphosphate biosynthesis.</text>
</comment>
<comment type="similarity">
    <text evidence="1">Belongs to the ThiC family.</text>
</comment>
<organism>
    <name type="scientific">Bacillus cereus (strain Q1)</name>
    <dbReference type="NCBI Taxonomy" id="361100"/>
    <lineage>
        <taxon>Bacteria</taxon>
        <taxon>Bacillati</taxon>
        <taxon>Bacillota</taxon>
        <taxon>Bacilli</taxon>
        <taxon>Bacillales</taxon>
        <taxon>Bacillaceae</taxon>
        <taxon>Bacillus</taxon>
        <taxon>Bacillus cereus group</taxon>
    </lineage>
</organism>
<reference key="1">
    <citation type="journal article" date="2009" name="J. Bacteriol.">
        <title>Complete genome sequence of the extremophilic Bacillus cereus strain Q1 with industrial applications.</title>
        <authorList>
            <person name="Xiong Z."/>
            <person name="Jiang Y."/>
            <person name="Qi D."/>
            <person name="Lu H."/>
            <person name="Yang F."/>
            <person name="Yang J."/>
            <person name="Chen L."/>
            <person name="Sun L."/>
            <person name="Xu X."/>
            <person name="Xue Y."/>
            <person name="Zhu Y."/>
            <person name="Jin Q."/>
        </authorList>
    </citation>
    <scope>NUCLEOTIDE SEQUENCE [LARGE SCALE GENOMIC DNA]</scope>
    <source>
        <strain>Q1</strain>
    </source>
</reference>
<feature type="chain" id="PRO_1000118502" description="Phosphomethylpyrimidine synthase">
    <location>
        <begin position="1"/>
        <end position="586"/>
    </location>
</feature>
<feature type="region of interest" description="Disordered" evidence="2">
    <location>
        <begin position="1"/>
        <end position="59"/>
    </location>
</feature>
<feature type="compositionally biased region" description="Basic and acidic residues" evidence="2">
    <location>
        <begin position="22"/>
        <end position="39"/>
    </location>
</feature>
<feature type="binding site" evidence="1">
    <location>
        <position position="193"/>
    </location>
    <ligand>
        <name>substrate</name>
    </ligand>
</feature>
<feature type="binding site" evidence="1">
    <location>
        <position position="222"/>
    </location>
    <ligand>
        <name>substrate</name>
    </ligand>
</feature>
<feature type="binding site" evidence="1">
    <location>
        <position position="251"/>
    </location>
    <ligand>
        <name>substrate</name>
    </ligand>
</feature>
<feature type="binding site" evidence="1">
    <location>
        <position position="287"/>
    </location>
    <ligand>
        <name>substrate</name>
    </ligand>
</feature>
<feature type="binding site" evidence="1">
    <location>
        <begin position="307"/>
        <end position="309"/>
    </location>
    <ligand>
        <name>substrate</name>
    </ligand>
</feature>
<feature type="binding site" evidence="1">
    <location>
        <begin position="348"/>
        <end position="351"/>
    </location>
    <ligand>
        <name>substrate</name>
    </ligand>
</feature>
<feature type="binding site" evidence="1">
    <location>
        <position position="387"/>
    </location>
    <ligand>
        <name>substrate</name>
    </ligand>
</feature>
<feature type="binding site" evidence="1">
    <location>
        <position position="391"/>
    </location>
    <ligand>
        <name>Zn(2+)</name>
        <dbReference type="ChEBI" id="CHEBI:29105"/>
    </ligand>
</feature>
<feature type="binding site" evidence="1">
    <location>
        <position position="414"/>
    </location>
    <ligand>
        <name>substrate</name>
    </ligand>
</feature>
<feature type="binding site" evidence="1">
    <location>
        <position position="455"/>
    </location>
    <ligand>
        <name>Zn(2+)</name>
        <dbReference type="ChEBI" id="CHEBI:29105"/>
    </ligand>
</feature>
<feature type="binding site" evidence="1">
    <location>
        <position position="535"/>
    </location>
    <ligand>
        <name>[4Fe-4S] cluster</name>
        <dbReference type="ChEBI" id="CHEBI:49883"/>
        <note>4Fe-4S-S-AdoMet</note>
    </ligand>
</feature>
<feature type="binding site" evidence="1">
    <location>
        <position position="538"/>
    </location>
    <ligand>
        <name>[4Fe-4S] cluster</name>
        <dbReference type="ChEBI" id="CHEBI:49883"/>
        <note>4Fe-4S-S-AdoMet</note>
    </ligand>
</feature>
<feature type="binding site" evidence="1">
    <location>
        <position position="543"/>
    </location>
    <ligand>
        <name>[4Fe-4S] cluster</name>
        <dbReference type="ChEBI" id="CHEBI:49883"/>
        <note>4Fe-4S-S-AdoMet</note>
    </ligand>
</feature>
<evidence type="ECO:0000255" key="1">
    <source>
        <dbReference type="HAMAP-Rule" id="MF_00089"/>
    </source>
</evidence>
<evidence type="ECO:0000256" key="2">
    <source>
        <dbReference type="SAM" id="MobiDB-lite"/>
    </source>
</evidence>
<accession>B9J5N4</accession>
<proteinExistence type="inferred from homology"/>
<keyword id="KW-0004">4Fe-4S</keyword>
<keyword id="KW-0408">Iron</keyword>
<keyword id="KW-0411">Iron-sulfur</keyword>
<keyword id="KW-0456">Lyase</keyword>
<keyword id="KW-0479">Metal-binding</keyword>
<keyword id="KW-0949">S-adenosyl-L-methionine</keyword>
<keyword id="KW-0784">Thiamine biosynthesis</keyword>
<keyword id="KW-0862">Zinc</keyword>
<name>THIC_BACCQ</name>
<sequence length="586" mass="65771">MKQSVSAEQIELKSSLPGSKKVYVDGPREGMKVPMREIEQSDTNGVPNPPIRVYDTSGPYTDPAYKVELEKGIPTPRHSWILERGDVEAYEGREVKPEDDGVKVASKHTPVFPQMDRKPLRAKQGANVTQMHYARNGIITSEMEYVAIREGVEPEFVRKEIAEGRAILPANINHPEAEPMIIGRNFHVKVNANIGNSAVSSSIAEEVEKMTWATRWGADTIMDLSTGKNIHTTREWIIRNAPVPVGTVPIYQALEKVNGIAEDLTWEVYRDTLIEQAEQGVDYFTIHAGVLLRYIPITAKRTTGIVSRGGSIMAQWCLFHHKENFLYTHFEEICEIMKQYDVSFSLGDGLRPGSIADANDEAQFSELETLGELTKIAWKHDVQVMIEGPGHVPMHLIKENMEKELDICQGAPFYTLGPLTTDIAPGYDHITSAIGAAMIGWFGTAMLCYVTPKEHLGLPNKDDVREGVITYKIAAHAADLAKGHKTAHQRDDALSKARFEFRWRDQFNLSLDPERAMEYHDETLPAEGAKTAHFCSMCGPKFCSMRISHDIREYAKENDLETTEAIEKGMKEKAKEFKDTGSHLYQ</sequence>